<gene>
    <name evidence="5" type="primary">fam212ab</name>
    <name type="synonym">inka1b</name>
</gene>
<feature type="chain" id="PRO_0000438818" description="PAK4-inhibitor inka2">
    <location>
        <begin position="1"/>
        <end position="288"/>
    </location>
</feature>
<feature type="region of interest" description="Inka box" evidence="1">
    <location>
        <begin position="159"/>
        <end position="196"/>
    </location>
</feature>
<feature type="sequence conflict" description="In Ref. 2; AAH55656." evidence="4" ref="2">
    <original>M</original>
    <variation>K</variation>
    <location>
        <position position="215"/>
    </location>
</feature>
<reference key="1">
    <citation type="journal article" date="2013" name="Nature">
        <title>The zebrafish reference genome sequence and its relationship to the human genome.</title>
        <authorList>
            <person name="Howe K."/>
            <person name="Clark M.D."/>
            <person name="Torroja C.F."/>
            <person name="Torrance J."/>
            <person name="Berthelot C."/>
            <person name="Muffato M."/>
            <person name="Collins J.E."/>
            <person name="Humphray S."/>
            <person name="McLaren K."/>
            <person name="Matthews L."/>
            <person name="McLaren S."/>
            <person name="Sealy I."/>
            <person name="Caccamo M."/>
            <person name="Churcher C."/>
            <person name="Scott C."/>
            <person name="Barrett J.C."/>
            <person name="Koch R."/>
            <person name="Rauch G.J."/>
            <person name="White S."/>
            <person name="Chow W."/>
            <person name="Kilian B."/>
            <person name="Quintais L.T."/>
            <person name="Guerra-Assuncao J.A."/>
            <person name="Zhou Y."/>
            <person name="Gu Y."/>
            <person name="Yen J."/>
            <person name="Vogel J.H."/>
            <person name="Eyre T."/>
            <person name="Redmond S."/>
            <person name="Banerjee R."/>
            <person name="Chi J."/>
            <person name="Fu B."/>
            <person name="Langley E."/>
            <person name="Maguire S.F."/>
            <person name="Laird G.K."/>
            <person name="Lloyd D."/>
            <person name="Kenyon E."/>
            <person name="Donaldson S."/>
            <person name="Sehra H."/>
            <person name="Almeida-King J."/>
            <person name="Loveland J."/>
            <person name="Trevanion S."/>
            <person name="Jones M."/>
            <person name="Quail M."/>
            <person name="Willey D."/>
            <person name="Hunt A."/>
            <person name="Burton J."/>
            <person name="Sims S."/>
            <person name="McLay K."/>
            <person name="Plumb B."/>
            <person name="Davis J."/>
            <person name="Clee C."/>
            <person name="Oliver K."/>
            <person name="Clark R."/>
            <person name="Riddle C."/>
            <person name="Elliot D."/>
            <person name="Threadgold G."/>
            <person name="Harden G."/>
            <person name="Ware D."/>
            <person name="Begum S."/>
            <person name="Mortimore B."/>
            <person name="Kerry G."/>
            <person name="Heath P."/>
            <person name="Phillimore B."/>
            <person name="Tracey A."/>
            <person name="Corby N."/>
            <person name="Dunn M."/>
            <person name="Johnson C."/>
            <person name="Wood J."/>
            <person name="Clark S."/>
            <person name="Pelan S."/>
            <person name="Griffiths G."/>
            <person name="Smith M."/>
            <person name="Glithero R."/>
            <person name="Howden P."/>
            <person name="Barker N."/>
            <person name="Lloyd C."/>
            <person name="Stevens C."/>
            <person name="Harley J."/>
            <person name="Holt K."/>
            <person name="Panagiotidis G."/>
            <person name="Lovell J."/>
            <person name="Beasley H."/>
            <person name="Henderson C."/>
            <person name="Gordon D."/>
            <person name="Auger K."/>
            <person name="Wright D."/>
            <person name="Collins J."/>
            <person name="Raisen C."/>
            <person name="Dyer L."/>
            <person name="Leung K."/>
            <person name="Robertson L."/>
            <person name="Ambridge K."/>
            <person name="Leongamornlert D."/>
            <person name="McGuire S."/>
            <person name="Gilderthorp R."/>
            <person name="Griffiths C."/>
            <person name="Manthravadi D."/>
            <person name="Nichol S."/>
            <person name="Barker G."/>
            <person name="Whitehead S."/>
            <person name="Kay M."/>
            <person name="Brown J."/>
            <person name="Murnane C."/>
            <person name="Gray E."/>
            <person name="Humphries M."/>
            <person name="Sycamore N."/>
            <person name="Barker D."/>
            <person name="Saunders D."/>
            <person name="Wallis J."/>
            <person name="Babbage A."/>
            <person name="Hammond S."/>
            <person name="Mashreghi-Mohammadi M."/>
            <person name="Barr L."/>
            <person name="Martin S."/>
            <person name="Wray P."/>
            <person name="Ellington A."/>
            <person name="Matthews N."/>
            <person name="Ellwood M."/>
            <person name="Woodmansey R."/>
            <person name="Clark G."/>
            <person name="Cooper J."/>
            <person name="Tromans A."/>
            <person name="Grafham D."/>
            <person name="Skuce C."/>
            <person name="Pandian R."/>
            <person name="Andrews R."/>
            <person name="Harrison E."/>
            <person name="Kimberley A."/>
            <person name="Garnett J."/>
            <person name="Fosker N."/>
            <person name="Hall R."/>
            <person name="Garner P."/>
            <person name="Kelly D."/>
            <person name="Bird C."/>
            <person name="Palmer S."/>
            <person name="Gehring I."/>
            <person name="Berger A."/>
            <person name="Dooley C.M."/>
            <person name="Ersan-Urun Z."/>
            <person name="Eser C."/>
            <person name="Geiger H."/>
            <person name="Geisler M."/>
            <person name="Karotki L."/>
            <person name="Kirn A."/>
            <person name="Konantz J."/>
            <person name="Konantz M."/>
            <person name="Oberlander M."/>
            <person name="Rudolph-Geiger S."/>
            <person name="Teucke M."/>
            <person name="Lanz C."/>
            <person name="Raddatz G."/>
            <person name="Osoegawa K."/>
            <person name="Zhu B."/>
            <person name="Rapp A."/>
            <person name="Widaa S."/>
            <person name="Langford C."/>
            <person name="Yang F."/>
            <person name="Schuster S.C."/>
            <person name="Carter N.P."/>
            <person name="Harrow J."/>
            <person name="Ning Z."/>
            <person name="Herrero J."/>
            <person name="Searle S.M."/>
            <person name="Enright A."/>
            <person name="Geisler R."/>
            <person name="Plasterk R.H."/>
            <person name="Lee C."/>
            <person name="Westerfield M."/>
            <person name="de Jong P.J."/>
            <person name="Zon L.I."/>
            <person name="Postlethwait J.H."/>
            <person name="Nusslein-Volhard C."/>
            <person name="Hubbard T.J."/>
            <person name="Roest Crollius H."/>
            <person name="Rogers J."/>
            <person name="Stemple D.L."/>
        </authorList>
    </citation>
    <scope>NUCLEOTIDE SEQUENCE [LARGE SCALE GENOMIC DNA]</scope>
    <source>
        <strain>Tuebingen</strain>
    </source>
</reference>
<reference key="2">
    <citation type="submission" date="2003-08" db="EMBL/GenBank/DDBJ databases">
        <authorList>
            <consortium name="NIH - Zebrafish Gene Collection (ZGC) project"/>
        </authorList>
    </citation>
    <scope>NUCLEOTIDE SEQUENCE [LARGE SCALE MRNA]</scope>
    <source>
        <strain>AB</strain>
    </source>
</reference>
<reference key="3">
    <citation type="journal article" date="2007" name="Development">
        <title>Inca: a novel p21-activated kinase-associated protein required for cranial neural crest development.</title>
        <authorList>
            <person name="Luo T."/>
            <person name="Xu Y."/>
            <person name="Hoffman T.L."/>
            <person name="Zhang T."/>
            <person name="Schilling T."/>
            <person name="Sargent T.D."/>
        </authorList>
    </citation>
    <scope>IDENTIFICATION</scope>
</reference>
<proteinExistence type="evidence at transcript level"/>
<name>INK1B_DANRE</name>
<protein>
    <recommendedName>
        <fullName evidence="4">PAK4-inhibitor inka2</fullName>
    </recommendedName>
    <alternativeName>
        <fullName evidence="3">Induced in neural crest by AP2-alpha protein 2</fullName>
        <shortName evidence="3">zinca2</shortName>
    </alternativeName>
</protein>
<organism>
    <name type="scientific">Danio rerio</name>
    <name type="common">Zebrafish</name>
    <name type="synonym">Brachydanio rerio</name>
    <dbReference type="NCBI Taxonomy" id="7955"/>
    <lineage>
        <taxon>Eukaryota</taxon>
        <taxon>Metazoa</taxon>
        <taxon>Chordata</taxon>
        <taxon>Craniata</taxon>
        <taxon>Vertebrata</taxon>
        <taxon>Euteleostomi</taxon>
        <taxon>Actinopterygii</taxon>
        <taxon>Neopterygii</taxon>
        <taxon>Teleostei</taxon>
        <taxon>Ostariophysi</taxon>
        <taxon>Cypriniformes</taxon>
        <taxon>Danionidae</taxon>
        <taxon>Danioninae</taxon>
        <taxon>Danio</taxon>
    </lineage>
</organism>
<sequence>MLCVRNSGECFRDHMRHMMRSLQDLKQIREPDDQSKCSYVTRARQKRIKQREQLSRLRISDVSDTSTYDSACCLASPLEEEEDQENHAERLAQGSPSSIKSLDFDSGYSEASWQDEGVVLRRTRNVRVSSSACVRTNRIRPKSTSDACLERWTSFEASDPTDWTTSLLTRGRNRQPLVLGDNSFADLIKNWMDLPECPDSAELKPSRKTAFLVNMRRKIAGISKGLEERRSAEAKRMSCPVGFQPPKPFFHQSHTSLHPMGTDFYQFSSVMKSGSRQPIICNDVIGYI</sequence>
<evidence type="ECO:0000250" key="1">
    <source>
        <dbReference type="UniProtKB" id="Q96EL1"/>
    </source>
</evidence>
<evidence type="ECO:0000250" key="2">
    <source>
        <dbReference type="UniProtKB" id="Q9NTI7"/>
    </source>
</evidence>
<evidence type="ECO:0000303" key="3">
    <source>
    </source>
</evidence>
<evidence type="ECO:0000305" key="4"/>
<evidence type="ECO:0000312" key="5">
    <source>
        <dbReference type="ZFIN" id="ZDB-GENE-030131-5539"/>
    </source>
</evidence>
<comment type="function">
    <text evidence="1">Inhibitor of the serine/threonine-protein kinase pak4/pak5. Acts by binding pak4/pak5 in a substrate-like manner, inhibiting the protein kinase activity.</text>
</comment>
<comment type="subcellular location">
    <subcellularLocation>
        <location evidence="2">Nucleus</location>
    </subcellularLocation>
</comment>
<comment type="domain">
    <text evidence="1">The Inka box (also named iBox or inca box) binds and inhibits PAK4 by binding a substrate-like manner.</text>
</comment>
<comment type="similarity">
    <text evidence="4">Belongs to the INKA family.</text>
</comment>
<dbReference type="EMBL" id="CU468828">
    <property type="status" value="NOT_ANNOTATED_CDS"/>
    <property type="molecule type" value="Genomic_DNA"/>
</dbReference>
<dbReference type="EMBL" id="BC055656">
    <property type="protein sequence ID" value="AAH55656.1"/>
    <property type="molecule type" value="mRNA"/>
</dbReference>
<dbReference type="RefSeq" id="NP_956082.1">
    <property type="nucleotide sequence ID" value="NM_199788.1"/>
</dbReference>
<dbReference type="FunCoup" id="F1QPR4">
    <property type="interactions" value="1096"/>
</dbReference>
<dbReference type="STRING" id="7955.ENSDARP00000094044"/>
<dbReference type="PaxDb" id="7955-ENSDARP00000094044"/>
<dbReference type="Ensembl" id="ENSDART00000103267">
    <property type="protein sequence ID" value="ENSDARP00000094044"/>
    <property type="gene ID" value="ENSDARG00000070404"/>
</dbReference>
<dbReference type="GeneID" id="327328"/>
<dbReference type="KEGG" id="dre:327328"/>
<dbReference type="AGR" id="ZFIN:ZDB-GENE-030131-5539"/>
<dbReference type="CTD" id="327328"/>
<dbReference type="ZFIN" id="ZDB-GENE-030131-5539">
    <property type="gene designation" value="inka1b"/>
</dbReference>
<dbReference type="eggNOG" id="ENOG502QYBJ">
    <property type="taxonomic scope" value="Eukaryota"/>
</dbReference>
<dbReference type="HOGENOM" id="CLU_077157_0_0_1"/>
<dbReference type="InParanoid" id="F1QPR4"/>
<dbReference type="OMA" id="EVLCMKE"/>
<dbReference type="OrthoDB" id="8811265at2759"/>
<dbReference type="TreeFam" id="TF332839"/>
<dbReference type="PRO" id="PR:F1QPR4"/>
<dbReference type="Proteomes" id="UP000000437">
    <property type="component" value="Chromosome 6"/>
</dbReference>
<dbReference type="Bgee" id="ENSDARG00000070404">
    <property type="expression patterns" value="Expressed in ovary and 45 other cell types or tissues"/>
</dbReference>
<dbReference type="GO" id="GO:0005634">
    <property type="term" value="C:nucleus"/>
    <property type="evidence" value="ECO:0000250"/>
    <property type="project" value="UniProtKB"/>
</dbReference>
<dbReference type="GO" id="GO:0019901">
    <property type="term" value="F:protein kinase binding"/>
    <property type="evidence" value="ECO:0000318"/>
    <property type="project" value="GO_Central"/>
</dbReference>
<dbReference type="GO" id="GO:0030291">
    <property type="term" value="F:protein serine/threonine kinase inhibitor activity"/>
    <property type="evidence" value="ECO:0000250"/>
    <property type="project" value="UniProtKB"/>
</dbReference>
<dbReference type="Gene3D" id="3.30.200.20">
    <property type="entry name" value="Phosphorylase Kinase, domain 1"/>
    <property type="match status" value="1"/>
</dbReference>
<dbReference type="InterPro" id="IPR029267">
    <property type="entry name" value="FAM212"/>
</dbReference>
<dbReference type="InterPro" id="IPR039201">
    <property type="entry name" value="Inka"/>
</dbReference>
<dbReference type="PANTHER" id="PTHR28615:SF1">
    <property type="entry name" value="PAK4-INHIBITOR INKA1"/>
    <property type="match status" value="1"/>
</dbReference>
<dbReference type="PANTHER" id="PTHR28615">
    <property type="entry name" value="PAK4-INHIBITOR INKA1-RELATED"/>
    <property type="match status" value="1"/>
</dbReference>
<dbReference type="Pfam" id="PF15342">
    <property type="entry name" value="FAM212"/>
    <property type="match status" value="1"/>
</dbReference>
<keyword id="KW-0539">Nucleus</keyword>
<keyword id="KW-1185">Reference proteome</keyword>
<accession>F1QPR4</accession>
<accession>Q7SXD0</accession>